<keyword id="KW-0009">Actin-binding</keyword>
<keyword id="KW-0067">ATP-binding</keyword>
<keyword id="KW-0963">Cytoplasm</keyword>
<keyword id="KW-0206">Cytoskeleton</keyword>
<keyword id="KW-0378">Hydrolase</keyword>
<keyword id="KW-0505">Motor protein</keyword>
<keyword id="KW-0518">Myosin</keyword>
<keyword id="KW-0547">Nucleotide-binding</keyword>
<keyword id="KW-0597">Phosphoprotein</keyword>
<keyword id="KW-1185">Reference proteome</keyword>
<keyword id="KW-0677">Repeat</keyword>
<keyword id="KW-0728">SH3 domain</keyword>
<accession>Q00647</accession>
<accession>C8VMZ7</accession>
<accession>Q5BD22</accession>
<dbReference type="EMBL" id="U12427">
    <property type="protein sequence ID" value="AAA67877.1"/>
    <property type="status" value="ALT_FRAME"/>
    <property type="molecule type" value="mRNA"/>
</dbReference>
<dbReference type="EMBL" id="AACD01000025">
    <property type="protein sequence ID" value="EAA64265.1"/>
    <property type="status" value="ALT_SEQ"/>
    <property type="molecule type" value="Genomic_DNA"/>
</dbReference>
<dbReference type="EMBL" id="BN001307">
    <property type="protein sequence ID" value="CBF85107.1"/>
    <property type="molecule type" value="Genomic_DNA"/>
</dbReference>
<dbReference type="PIR" id="A56511">
    <property type="entry name" value="A56511"/>
</dbReference>
<dbReference type="RefSeq" id="XP_659162.1">
    <property type="nucleotide sequence ID" value="XM_654070.1"/>
</dbReference>
<dbReference type="SMR" id="Q00647"/>
<dbReference type="FunCoup" id="Q00647">
    <property type="interactions" value="321"/>
</dbReference>
<dbReference type="STRING" id="227321.Q00647"/>
<dbReference type="EnsemblFungi" id="CBF85107">
    <property type="protein sequence ID" value="CBF85107"/>
    <property type="gene ID" value="ANIA_01558"/>
</dbReference>
<dbReference type="VEuPathDB" id="FungiDB:AN1558"/>
<dbReference type="eggNOG" id="KOG0162">
    <property type="taxonomic scope" value="Eukaryota"/>
</dbReference>
<dbReference type="HOGENOM" id="CLU_000192_7_6_1"/>
<dbReference type="InParanoid" id="Q00647"/>
<dbReference type="OMA" id="PPEEYQM"/>
<dbReference type="OrthoDB" id="6108017at2759"/>
<dbReference type="Proteomes" id="UP000000560">
    <property type="component" value="Chromosome VII"/>
</dbReference>
<dbReference type="GO" id="GO:0030479">
    <property type="term" value="C:actin cortical patch"/>
    <property type="evidence" value="ECO:0000314"/>
    <property type="project" value="AspGD"/>
</dbReference>
<dbReference type="GO" id="GO:0015629">
    <property type="term" value="C:actin cytoskeleton"/>
    <property type="evidence" value="ECO:0000318"/>
    <property type="project" value="GO_Central"/>
</dbReference>
<dbReference type="GO" id="GO:0051285">
    <property type="term" value="C:cell cortex of cell tip"/>
    <property type="evidence" value="ECO:0007669"/>
    <property type="project" value="EnsemblFungi"/>
</dbReference>
<dbReference type="GO" id="GO:0030428">
    <property type="term" value="C:cell septum"/>
    <property type="evidence" value="ECO:0000314"/>
    <property type="project" value="AspGD"/>
</dbReference>
<dbReference type="GO" id="GO:0051286">
    <property type="term" value="C:cell tip"/>
    <property type="evidence" value="ECO:0000318"/>
    <property type="project" value="GO_Central"/>
</dbReference>
<dbReference type="GO" id="GO:0005737">
    <property type="term" value="C:cytoplasm"/>
    <property type="evidence" value="ECO:0000318"/>
    <property type="project" value="GO_Central"/>
</dbReference>
<dbReference type="GO" id="GO:0001411">
    <property type="term" value="C:hyphal tip"/>
    <property type="evidence" value="ECO:0000314"/>
    <property type="project" value="AspGD"/>
</dbReference>
<dbReference type="GO" id="GO:0043332">
    <property type="term" value="C:mating projection tip"/>
    <property type="evidence" value="ECO:0007669"/>
    <property type="project" value="EnsemblFungi"/>
</dbReference>
<dbReference type="GO" id="GO:0031097">
    <property type="term" value="C:medial cortex"/>
    <property type="evidence" value="ECO:0007669"/>
    <property type="project" value="EnsemblFungi"/>
</dbReference>
<dbReference type="GO" id="GO:0045160">
    <property type="term" value="C:myosin I complex"/>
    <property type="evidence" value="ECO:0007669"/>
    <property type="project" value="EnsemblFungi"/>
</dbReference>
<dbReference type="GO" id="GO:0005886">
    <property type="term" value="C:plasma membrane"/>
    <property type="evidence" value="ECO:0000318"/>
    <property type="project" value="GO_Central"/>
</dbReference>
<dbReference type="GO" id="GO:0044853">
    <property type="term" value="C:plasma membrane raft"/>
    <property type="evidence" value="ECO:0007669"/>
    <property type="project" value="EnsemblFungi"/>
</dbReference>
<dbReference type="GO" id="GO:0005628">
    <property type="term" value="C:prospore membrane"/>
    <property type="evidence" value="ECO:0007669"/>
    <property type="project" value="EnsemblFungi"/>
</dbReference>
<dbReference type="GO" id="GO:0051015">
    <property type="term" value="F:actin filament binding"/>
    <property type="evidence" value="ECO:0000318"/>
    <property type="project" value="GO_Central"/>
</dbReference>
<dbReference type="GO" id="GO:0071933">
    <property type="term" value="F:Arp2/3 complex binding"/>
    <property type="evidence" value="ECO:0007669"/>
    <property type="project" value="EnsemblFungi"/>
</dbReference>
<dbReference type="GO" id="GO:0005524">
    <property type="term" value="F:ATP binding"/>
    <property type="evidence" value="ECO:0007669"/>
    <property type="project" value="UniProtKB-KW"/>
</dbReference>
<dbReference type="GO" id="GO:0016787">
    <property type="term" value="F:hydrolase activity"/>
    <property type="evidence" value="ECO:0007669"/>
    <property type="project" value="UniProtKB-KW"/>
</dbReference>
<dbReference type="GO" id="GO:0000146">
    <property type="term" value="F:microfilament motor activity"/>
    <property type="evidence" value="ECO:0000318"/>
    <property type="project" value="GO_Central"/>
</dbReference>
<dbReference type="GO" id="GO:0000147">
    <property type="term" value="P:actin cortical patch assembly"/>
    <property type="evidence" value="ECO:0007669"/>
    <property type="project" value="EnsemblFungi"/>
</dbReference>
<dbReference type="GO" id="GO:0051666">
    <property type="term" value="P:actin cortical patch localization"/>
    <property type="evidence" value="ECO:0000314"/>
    <property type="project" value="AspGD"/>
</dbReference>
<dbReference type="GO" id="GO:0007015">
    <property type="term" value="P:actin filament organization"/>
    <property type="evidence" value="ECO:0000318"/>
    <property type="project" value="GO_Central"/>
</dbReference>
<dbReference type="GO" id="GO:0009932">
    <property type="term" value="P:cell tip growth"/>
    <property type="evidence" value="ECO:0000315"/>
    <property type="project" value="AspGD"/>
</dbReference>
<dbReference type="GO" id="GO:0006897">
    <property type="term" value="P:endocytosis"/>
    <property type="evidence" value="ECO:0000318"/>
    <property type="project" value="GO_Central"/>
</dbReference>
<dbReference type="GO" id="GO:0000281">
    <property type="term" value="P:mitotic cytokinesis"/>
    <property type="evidence" value="ECO:0007669"/>
    <property type="project" value="EnsemblFungi"/>
</dbReference>
<dbReference type="CDD" id="cd01378">
    <property type="entry name" value="MYSc_Myo1"/>
    <property type="match status" value="1"/>
</dbReference>
<dbReference type="FunFam" id="1.10.10.820:FF:000001">
    <property type="entry name" value="Myosin heavy chain"/>
    <property type="match status" value="1"/>
</dbReference>
<dbReference type="FunFam" id="1.20.120.720:FF:000015">
    <property type="entry name" value="Myosin I"/>
    <property type="match status" value="1"/>
</dbReference>
<dbReference type="FunFam" id="2.30.30.40:FF:000254">
    <property type="entry name" value="Myosin I MyoA/Myo5"/>
    <property type="match status" value="1"/>
</dbReference>
<dbReference type="FunFam" id="1.20.5.4820:FF:000004">
    <property type="entry name" value="Myosin IE"/>
    <property type="match status" value="1"/>
</dbReference>
<dbReference type="FunFam" id="1.20.58.530:FF:000007">
    <property type="entry name" value="Myosin IE"/>
    <property type="match status" value="1"/>
</dbReference>
<dbReference type="Gene3D" id="1.10.10.820">
    <property type="match status" value="1"/>
</dbReference>
<dbReference type="Gene3D" id="1.20.5.4820">
    <property type="match status" value="1"/>
</dbReference>
<dbReference type="Gene3D" id="1.20.58.530">
    <property type="match status" value="1"/>
</dbReference>
<dbReference type="Gene3D" id="3.40.850.10">
    <property type="entry name" value="Kinesin motor domain"/>
    <property type="match status" value="1"/>
</dbReference>
<dbReference type="Gene3D" id="1.20.120.720">
    <property type="entry name" value="Myosin VI head, motor domain, U50 subdomain"/>
    <property type="match status" value="1"/>
</dbReference>
<dbReference type="Gene3D" id="2.30.30.40">
    <property type="entry name" value="SH3 Domains"/>
    <property type="match status" value="1"/>
</dbReference>
<dbReference type="InterPro" id="IPR036961">
    <property type="entry name" value="Kinesin_motor_dom_sf"/>
</dbReference>
<dbReference type="InterPro" id="IPR054489">
    <property type="entry name" value="Myo1_CA"/>
</dbReference>
<dbReference type="InterPro" id="IPR001609">
    <property type="entry name" value="Myosin_head_motor_dom-like"/>
</dbReference>
<dbReference type="InterPro" id="IPR010926">
    <property type="entry name" value="Myosin_TH1"/>
</dbReference>
<dbReference type="InterPro" id="IPR036072">
    <property type="entry name" value="MYSc_Myo1"/>
</dbReference>
<dbReference type="InterPro" id="IPR027417">
    <property type="entry name" value="P-loop_NTPase"/>
</dbReference>
<dbReference type="InterPro" id="IPR036028">
    <property type="entry name" value="SH3-like_dom_sf"/>
</dbReference>
<dbReference type="InterPro" id="IPR001452">
    <property type="entry name" value="SH3_domain"/>
</dbReference>
<dbReference type="PANTHER" id="PTHR13140">
    <property type="entry name" value="MYOSIN"/>
    <property type="match status" value="1"/>
</dbReference>
<dbReference type="PANTHER" id="PTHR13140:SF837">
    <property type="entry name" value="MYOSIN-3-RELATED"/>
    <property type="match status" value="1"/>
</dbReference>
<dbReference type="Pfam" id="PF22773">
    <property type="entry name" value="Myo1_CA"/>
    <property type="match status" value="1"/>
</dbReference>
<dbReference type="Pfam" id="PF00063">
    <property type="entry name" value="Myosin_head"/>
    <property type="match status" value="1"/>
</dbReference>
<dbReference type="Pfam" id="PF06017">
    <property type="entry name" value="Myosin_TH1"/>
    <property type="match status" value="1"/>
</dbReference>
<dbReference type="Pfam" id="PF00018">
    <property type="entry name" value="SH3_1"/>
    <property type="match status" value="1"/>
</dbReference>
<dbReference type="PRINTS" id="PR00193">
    <property type="entry name" value="MYOSINHEAVY"/>
</dbReference>
<dbReference type="SMART" id="SM00242">
    <property type="entry name" value="MYSc"/>
    <property type="match status" value="1"/>
</dbReference>
<dbReference type="SMART" id="SM00326">
    <property type="entry name" value="SH3"/>
    <property type="match status" value="1"/>
</dbReference>
<dbReference type="SUPFAM" id="SSF52540">
    <property type="entry name" value="P-loop containing nucleoside triphosphate hydrolases"/>
    <property type="match status" value="1"/>
</dbReference>
<dbReference type="SUPFAM" id="SSF50044">
    <property type="entry name" value="SH3-domain"/>
    <property type="match status" value="1"/>
</dbReference>
<dbReference type="PROSITE" id="PS51456">
    <property type="entry name" value="MYOSIN_MOTOR"/>
    <property type="match status" value="1"/>
</dbReference>
<dbReference type="PROSITE" id="PS50002">
    <property type="entry name" value="SH3"/>
    <property type="match status" value="1"/>
</dbReference>
<dbReference type="PROSITE" id="PS51757">
    <property type="entry name" value="TH1"/>
    <property type="match status" value="1"/>
</dbReference>
<reference key="1">
    <citation type="journal article" date="1995" name="J. Cell Biol.">
        <title>myoA of Aspergillus nidulans encodes an essential myosin I required for secretion and polarized growth.</title>
        <authorList>
            <person name="McGoldrick C.A."/>
            <person name="Gruver C."/>
            <person name="May G.S."/>
        </authorList>
    </citation>
    <scope>NUCLEOTIDE SEQUENCE [MRNA]</scope>
    <scope>SUBCELLULAR LOCATION</scope>
    <scope>DEVELOPMENTAL STAGE</scope>
</reference>
<reference key="2">
    <citation type="journal article" date="2005" name="Nature">
        <title>Sequencing of Aspergillus nidulans and comparative analysis with A. fumigatus and A. oryzae.</title>
        <authorList>
            <person name="Galagan J.E."/>
            <person name="Calvo S.E."/>
            <person name="Cuomo C."/>
            <person name="Ma L.-J."/>
            <person name="Wortman J.R."/>
            <person name="Batzoglou S."/>
            <person name="Lee S.-I."/>
            <person name="Bastuerkmen M."/>
            <person name="Spevak C.C."/>
            <person name="Clutterbuck J."/>
            <person name="Kapitonov V."/>
            <person name="Jurka J."/>
            <person name="Scazzocchio C."/>
            <person name="Farman M.L."/>
            <person name="Butler J."/>
            <person name="Purcell S."/>
            <person name="Harris S."/>
            <person name="Braus G.H."/>
            <person name="Draht O."/>
            <person name="Busch S."/>
            <person name="D'Enfert C."/>
            <person name="Bouchier C."/>
            <person name="Goldman G.H."/>
            <person name="Bell-Pedersen D."/>
            <person name="Griffiths-Jones S."/>
            <person name="Doonan J.H."/>
            <person name="Yu J."/>
            <person name="Vienken K."/>
            <person name="Pain A."/>
            <person name="Freitag M."/>
            <person name="Selker E.U."/>
            <person name="Archer D.B."/>
            <person name="Penalva M.A."/>
            <person name="Oakley B.R."/>
            <person name="Momany M."/>
            <person name="Tanaka T."/>
            <person name="Kumagai T."/>
            <person name="Asai K."/>
            <person name="Machida M."/>
            <person name="Nierman W.C."/>
            <person name="Denning D.W."/>
            <person name="Caddick M.X."/>
            <person name="Hynes M."/>
            <person name="Paoletti M."/>
            <person name="Fischer R."/>
            <person name="Miller B.L."/>
            <person name="Dyer P.S."/>
            <person name="Sachs M.S."/>
            <person name="Osmani S.A."/>
            <person name="Birren B.W."/>
        </authorList>
    </citation>
    <scope>NUCLEOTIDE SEQUENCE [LARGE SCALE GENOMIC DNA]</scope>
    <source>
        <strain>FGSC A4 / ATCC 38163 / CBS 112.46 / NRRL 194 / M139</strain>
    </source>
</reference>
<reference key="3">
    <citation type="journal article" date="2009" name="Fungal Genet. Biol.">
        <title>The 2008 update of the Aspergillus nidulans genome annotation: a community effort.</title>
        <authorList>
            <person name="Wortman J.R."/>
            <person name="Gilsenan J.M."/>
            <person name="Joardar V."/>
            <person name="Deegan J."/>
            <person name="Clutterbuck J."/>
            <person name="Andersen M.R."/>
            <person name="Archer D."/>
            <person name="Bencina M."/>
            <person name="Braus G."/>
            <person name="Coutinho P."/>
            <person name="von Dohren H."/>
            <person name="Doonan J."/>
            <person name="Driessen A.J."/>
            <person name="Durek P."/>
            <person name="Espeso E."/>
            <person name="Fekete E."/>
            <person name="Flipphi M."/>
            <person name="Estrada C.G."/>
            <person name="Geysens S."/>
            <person name="Goldman G."/>
            <person name="de Groot P.W."/>
            <person name="Hansen K."/>
            <person name="Harris S.D."/>
            <person name="Heinekamp T."/>
            <person name="Helmstaedt K."/>
            <person name="Henrissat B."/>
            <person name="Hofmann G."/>
            <person name="Homan T."/>
            <person name="Horio T."/>
            <person name="Horiuchi H."/>
            <person name="James S."/>
            <person name="Jones M."/>
            <person name="Karaffa L."/>
            <person name="Karanyi Z."/>
            <person name="Kato M."/>
            <person name="Keller N."/>
            <person name="Kelly D.E."/>
            <person name="Kiel J.A."/>
            <person name="Kim J.M."/>
            <person name="van der Klei I.J."/>
            <person name="Klis F.M."/>
            <person name="Kovalchuk A."/>
            <person name="Krasevec N."/>
            <person name="Kubicek C.P."/>
            <person name="Liu B."/>
            <person name="Maccabe A."/>
            <person name="Meyer V."/>
            <person name="Mirabito P."/>
            <person name="Miskei M."/>
            <person name="Mos M."/>
            <person name="Mullins J."/>
            <person name="Nelson D.R."/>
            <person name="Nielsen J."/>
            <person name="Oakley B.R."/>
            <person name="Osmani S.A."/>
            <person name="Pakula T."/>
            <person name="Paszewski A."/>
            <person name="Paulsen I."/>
            <person name="Pilsyk S."/>
            <person name="Pocsi I."/>
            <person name="Punt P.J."/>
            <person name="Ram A.F."/>
            <person name="Ren Q."/>
            <person name="Robellet X."/>
            <person name="Robson G."/>
            <person name="Seiboth B."/>
            <person name="van Solingen P."/>
            <person name="Specht T."/>
            <person name="Sun J."/>
            <person name="Taheri-Talesh N."/>
            <person name="Takeshita N."/>
            <person name="Ussery D."/>
            <person name="vanKuyk P.A."/>
            <person name="Visser H."/>
            <person name="van de Vondervoort P.J."/>
            <person name="de Vries R.P."/>
            <person name="Walton J."/>
            <person name="Xiang X."/>
            <person name="Xiong Y."/>
            <person name="Zeng A.P."/>
            <person name="Brandt B.W."/>
            <person name="Cornell M.J."/>
            <person name="van den Hondel C.A."/>
            <person name="Visser J."/>
            <person name="Oliver S.G."/>
            <person name="Turner G."/>
        </authorList>
    </citation>
    <scope>GENOME REANNOTATION</scope>
    <source>
        <strain>FGSC A4 / ATCC 38163 / CBS 112.46 / NRRL 194 / M139</strain>
    </source>
</reference>
<reference key="4">
    <citation type="journal article" date="1998" name="J. Biol. Chem.">
        <title>Structural requirements for in vivo myosin I function in Aspergillus nidulans.</title>
        <authorList>
            <person name="Osherov N."/>
            <person name="Yamashita R.A."/>
            <person name="Chung Y.-S."/>
            <person name="May G.S."/>
        </authorList>
    </citation>
    <scope>FUNCTION</scope>
    <scope>INTERACTION WITH CAMA</scope>
</reference>
<reference key="5">
    <citation type="journal article" date="2000" name="Cell Motil. Cytoskeleton">
        <title>Localization of wild type and mutant class I myosin proteins in Aspergillus nidulans using GFP-fusion proteins.</title>
        <authorList>
            <person name="Yamashita R.A."/>
            <person name="Osherov N."/>
            <person name="May G.S."/>
        </authorList>
    </citation>
    <scope>SUBCELLULAR LOCATION</scope>
</reference>
<feature type="chain" id="PRO_0000338551" description="Myosin-1">
    <location>
        <begin position="1"/>
        <end position="1249"/>
    </location>
</feature>
<feature type="domain" description="Myosin motor" evidence="4">
    <location>
        <begin position="50"/>
        <end position="729"/>
    </location>
</feature>
<feature type="domain" description="IQ 1">
    <location>
        <begin position="733"/>
        <end position="753"/>
    </location>
</feature>
<feature type="domain" description="IQ 2">
    <location>
        <begin position="754"/>
        <end position="779"/>
    </location>
</feature>
<feature type="domain" description="TH1" evidence="5">
    <location>
        <begin position="787"/>
        <end position="979"/>
    </location>
</feature>
<feature type="domain" description="SH3" evidence="3">
    <location>
        <begin position="1074"/>
        <end position="1135"/>
    </location>
</feature>
<feature type="region of interest" description="Disordered" evidence="6">
    <location>
        <begin position="1"/>
        <end position="40"/>
    </location>
</feature>
<feature type="region of interest" description="Actin-binding" evidence="1">
    <location>
        <begin position="418"/>
        <end position="500"/>
    </location>
</feature>
<feature type="region of interest" description="Disordered" evidence="6">
    <location>
        <begin position="959"/>
        <end position="1081"/>
    </location>
</feature>
<feature type="region of interest" description="Disordered" evidence="6">
    <location>
        <begin position="1127"/>
        <end position="1249"/>
    </location>
</feature>
<feature type="compositionally biased region" description="Low complexity" evidence="6">
    <location>
        <begin position="1026"/>
        <end position="1035"/>
    </location>
</feature>
<feature type="compositionally biased region" description="Low complexity" evidence="6">
    <location>
        <begin position="1043"/>
        <end position="1061"/>
    </location>
</feature>
<feature type="compositionally biased region" description="Pro residues" evidence="6">
    <location>
        <begin position="1062"/>
        <end position="1073"/>
    </location>
</feature>
<feature type="compositionally biased region" description="Pro residues" evidence="6">
    <location>
        <begin position="1137"/>
        <end position="1149"/>
    </location>
</feature>
<feature type="compositionally biased region" description="Low complexity" evidence="6">
    <location>
        <begin position="1150"/>
        <end position="1170"/>
    </location>
</feature>
<feature type="compositionally biased region" description="Polar residues" evidence="6">
    <location>
        <begin position="1199"/>
        <end position="1221"/>
    </location>
</feature>
<feature type="compositionally biased region" description="Low complexity" evidence="6">
    <location>
        <begin position="1222"/>
        <end position="1235"/>
    </location>
</feature>
<feature type="binding site" evidence="2">
    <location>
        <begin position="143"/>
        <end position="150"/>
    </location>
    <ligand>
        <name>ATP</name>
        <dbReference type="ChEBI" id="CHEBI:30616"/>
    </ligand>
</feature>
<feature type="modified residue" description="Phosphoserine" evidence="1">
    <location>
        <position position="371"/>
    </location>
</feature>
<feature type="sequence conflict" description="In Ref. 1; AAA67877." evidence="10" ref="1">
    <original>T</original>
    <variation>M</variation>
    <location>
        <position position="608"/>
    </location>
</feature>
<feature type="sequence conflict" description="In Ref. 1; AAA67877." evidence="10" ref="1">
    <original>R</original>
    <variation>P</variation>
    <location>
        <position position="762"/>
    </location>
</feature>
<feature type="sequence conflict" description="In Ref. 1; AAA67877." evidence="10" ref="1">
    <original>S</original>
    <variation>C</variation>
    <location>
        <position position="1223"/>
    </location>
</feature>
<feature type="sequence conflict" description="In Ref. 1; AAA67877." evidence="10" ref="1">
    <original>A</original>
    <variation>R</variation>
    <location>
        <position position="1234"/>
    </location>
</feature>
<evidence type="ECO:0000250" key="1"/>
<evidence type="ECO:0000255" key="2"/>
<evidence type="ECO:0000255" key="3">
    <source>
        <dbReference type="PROSITE-ProRule" id="PRU00192"/>
    </source>
</evidence>
<evidence type="ECO:0000255" key="4">
    <source>
        <dbReference type="PROSITE-ProRule" id="PRU00782"/>
    </source>
</evidence>
<evidence type="ECO:0000255" key="5">
    <source>
        <dbReference type="PROSITE-ProRule" id="PRU01093"/>
    </source>
</evidence>
<evidence type="ECO:0000256" key="6">
    <source>
        <dbReference type="SAM" id="MobiDB-lite"/>
    </source>
</evidence>
<evidence type="ECO:0000269" key="7">
    <source>
    </source>
</evidence>
<evidence type="ECO:0000269" key="8">
    <source>
    </source>
</evidence>
<evidence type="ECO:0000269" key="9">
    <source>
    </source>
</evidence>
<evidence type="ECO:0000305" key="10"/>
<sequence>MGHSRRPAGGEKKSRFGRSKAAADVGDGRQAGGKPQVRKAVFESTKKKEIGVSDLTLLSKISNEAINDNLKLRFQHDEIYTYIGHVLVSVNPFRDLGIYTDSVLNSYRGKNRLEVPPHVFAVAESAYYNMKSYKDNQCVIISGESGAGKTEAAKRIMQYIASVSGGSDSSIQQTKDMVLATNPLLESFGNAKTLRNNNSSRFGKYLELEFNAQGEPVGANITNYLLEKSRVVGQITNERNFHIFYQFAKGAPQKYRDSFGVQQPQSYLYTSRSKCFDVPGVDDVAEFQDTLNAMSVIGMSEAEQDNVFRMLAAILWMGNIQFAEDDSGNAAITDQSVVDFVAYLLEVDAGQVNQALTIRMMETSRGGRRGSVYEVPLNTTQALAVRDALAKAIYFNLFDWIVGRVNQSLTAKGAVANSIGILDIYGFEIFEKNSFEQLCINYVNEKLQQIFIQLTLKAEQDEYEREQITWTPIKYFDNKVVCSLIEDKRPPGVFAALNDACATAHADSGAADNTFVGRLNFLGQNPNFENRQGQFIIKHYAGDVSYAVQGMTDKNKDQLLKDLLNLVQSSSNHFVHTLFPEQVNQDDKRRPPTASDKIKASANDLVATLMKAQPSYIRTIKPNDNKAPKEFNESNVLHQIKYLGLQENVRIRRAGFAYRQTFDKFVERFYLLSPKTSYAGDYTWTGDVETGARQILKDTRIPAEEYQMGITKVFIKTPETLFALEAMRDRYWHNMAIRIQRAWRNYLRYRTECAIRIQRFWRRMNGGLELLKLRDQGHTILGGRKERRRMSILGSRRFLGDYVGISNKGGPGEMIRSGAAISTSDDVLFSCRGEVLVSKFGRSSKPSPRIFVLTNRHVYIVSQNFVNNQLVISSERTIPIGAIKTVSASSYRDDWFSLVVGGQEPDPLCNCVFKTEFFTHLHNALRGQLNLKIGPEIEYNKKPGKLATVKVVKDGSQVDSYKSGTIHTGPGEPPNSVSKPTPRGKQVAARPVTKGKLLRPGGPGGGPSKLASRPVPERRPIPQPTPQTAAAQPTPASRPVPQPVAAVAASHSRTSSTASARAPPPPPPAPPAAAGPKKAKALYDFSSDNNGMLSISAGQIVEIVSKEGNGWWLCMNLETSAQGWTPEAYLEEQVAPTPKPAPPPPPPVAPRASPAPVNGSAAVAAAKAKAAPPPPAKRPNMAGRKTAPAPPPAPRDSAVSMNSQGDSSGASGRGTPSSVSNASLAGGLAEALRARQSAMQGKQDDDDDW</sequence>
<name>MYO1_EMENI</name>
<protein>
    <recommendedName>
        <fullName>Myosin-1</fullName>
    </recommendedName>
    <alternativeName>
        <fullName>Class I unconventional myosin</fullName>
    </alternativeName>
    <alternativeName>
        <fullName>Type I myosin</fullName>
    </alternativeName>
</protein>
<comment type="function">
    <text evidence="1 9">Type-I myosin implicated in the organization of the actin cytoskeleton. Required for proper actin cytoskeleton polarization. At the cell cortex, assembles in patch-like structures together with proteins from the actin-polymerizing machinery and promotes actin assembly. Functions as actin nucleation-promoting factor (NPF) for the Arp2/3 complex (By similarity). Plays an important role in polarized growth, spore germination, hyphal morphogenesis, and septal wall formation.</text>
</comment>
<comment type="subunit">
    <text evidence="9">Interacts (via IQ domains) with camA.</text>
</comment>
<comment type="subcellular location">
    <subcellularLocation>
        <location evidence="7 8">Cytoplasm</location>
        <location evidence="7 8">Cytoskeleton</location>
        <location evidence="7 8">Actin patch</location>
    </subcellularLocation>
    <text>Localizes to cortical patch-like structures. Enriched at sites of polarized growth, like the growing hyphal tips and sites of septum formation.</text>
</comment>
<comment type="developmental stage">
    <text evidence="8">Found in dormant conidiospores.</text>
</comment>
<comment type="domain">
    <text evidence="1">The myosin motor domain displays actin-stimulated ATPase activity and generates a mechanochemical force.</text>
</comment>
<comment type="domain">
    <text evidence="1">The tail domain participates in molecular interactions that specify the role of the motor domain (By similarity). It is composed of several tail homology (TH) domains, namely a putative phospholipid-binding myosin tail domain (also named TH1), an Ala- and Pro-rich domain (TH2), followed by an SH3 domain and a C-terminal acidic domain (TH3).</text>
</comment>
<comment type="PTM">
    <text evidence="1">Phosphorylation of the TEDS site (Ser-371) is required for the polarization of the actin cytoskeleton. Phosphorylation probably activates the myosin-I ATPase activity (By similarity).</text>
</comment>
<comment type="similarity">
    <text evidence="10">Belongs to the TRAFAC class myosin-kinesin ATPase superfamily. Myosin family.</text>
</comment>
<comment type="sequence caution" evidence="10">
    <conflict type="frameshift">
        <sequence resource="EMBL-CDS" id="AAA67877"/>
    </conflict>
</comment>
<comment type="sequence caution" evidence="10">
    <conflict type="erroneous gene model prediction">
        <sequence resource="EMBL-CDS" id="EAA64265"/>
    </conflict>
</comment>
<gene>
    <name type="primary">myoA</name>
    <name type="ORF">AN1558</name>
</gene>
<proteinExistence type="evidence at protein level"/>
<organism>
    <name type="scientific">Emericella nidulans (strain FGSC A4 / ATCC 38163 / CBS 112.46 / NRRL 194 / M139)</name>
    <name type="common">Aspergillus nidulans</name>
    <dbReference type="NCBI Taxonomy" id="227321"/>
    <lineage>
        <taxon>Eukaryota</taxon>
        <taxon>Fungi</taxon>
        <taxon>Dikarya</taxon>
        <taxon>Ascomycota</taxon>
        <taxon>Pezizomycotina</taxon>
        <taxon>Eurotiomycetes</taxon>
        <taxon>Eurotiomycetidae</taxon>
        <taxon>Eurotiales</taxon>
        <taxon>Aspergillaceae</taxon>
        <taxon>Aspergillus</taxon>
        <taxon>Aspergillus subgen. Nidulantes</taxon>
    </lineage>
</organism>